<comment type="function">
    <text evidence="3">May have dioxygenase activity.</text>
</comment>
<comment type="cofactor">
    <cofactor evidence="1">
        <name>Fe cation</name>
        <dbReference type="ChEBI" id="CHEBI:24875"/>
    </cofactor>
    <text evidence="1">Binds 1 Fe cation per subunit.</text>
</comment>
<comment type="similarity">
    <text evidence="3">Belongs to the 4HPPD family.</text>
</comment>
<comment type="caution">
    <text evidence="3">The gene for this protein is duplicated in strains AX3 and AX4. These strains contain a duplication of a segment of 750 kb of chromosome 2 compared to the corresponding sequence in strain AX2.</text>
</comment>
<evidence type="ECO:0000250" key="1"/>
<evidence type="ECO:0000255" key="2">
    <source>
        <dbReference type="PROSITE-ProRule" id="PRU01163"/>
    </source>
</evidence>
<evidence type="ECO:0000305" key="3"/>
<sequence length="494" mass="57087">MKNEKLKVDNHIHNNIQFIDCLEFWVSNAKSFIKSFLQPMNFEVIGTRFNDERSRIQYLLLNNVISRSNLQNQFQIENNSYIKPIQGNQFIKVTSSISPNDLDFHSKIQKHGDFIQNISFYCNDINLAYNKSINNGAKSVQLPMKEYFKNCKDIVETAIIESPFKDLQHTFINRNITSFDDNNNNNYDNNKEIFGNPLFLYPEFQEIKDKELFKIEKEDSSSINGCTGSLDHIATCIKNGEMNYFVEWYRKCLGFKLLSDKDSVATDESENFENELILDKNFYVITKSDFKYTKKENIGLKMAVLSNQPLNTSFHKTPPIQFVISEAIQGGEGQIEQFIHYFGGEGVQHLAFNSNNIFKAVEIAKSQKLEFVYIPQSYYSKLDERLKHLFPNSIPKILKENLMKFGILIDSDAITNTNENNSNNNNNNDSQNNTEINQNIGYIKQIFTKYINDRPTMFFELIERSNALGFGKGNIIALFESLEKESSGSQLKSD</sequence>
<name>HPDL_DICDI</name>
<accession>Q557J8</accession>
<accession>Q86KI5</accession>
<feature type="chain" id="PRO_0000327997" description="Uncharacterized 4-hydroxyphenylpyruvate dioxygenase-like protein">
    <location>
        <begin position="1"/>
        <end position="494"/>
    </location>
</feature>
<feature type="domain" description="VOC 1" evidence="2">
    <location>
        <begin position="18"/>
        <end position="174"/>
    </location>
</feature>
<feature type="domain" description="VOC 2" evidence="2">
    <location>
        <begin position="229"/>
        <end position="408"/>
    </location>
</feature>
<feature type="binding site" evidence="1">
    <location>
        <position position="232"/>
    </location>
    <ligand>
        <name>Fe cation</name>
        <dbReference type="ChEBI" id="CHEBI:24875"/>
    </ligand>
</feature>
<feature type="binding site" evidence="1">
    <location>
        <position position="349"/>
    </location>
    <ligand>
        <name>Fe cation</name>
        <dbReference type="ChEBI" id="CHEBI:24875"/>
    </ligand>
</feature>
<feature type="binding site" evidence="1">
    <location>
        <position position="460"/>
    </location>
    <ligand>
        <name>Fe cation</name>
        <dbReference type="ChEBI" id="CHEBI:24875"/>
    </ligand>
</feature>
<proteinExistence type="inferred from homology"/>
<reference key="1">
    <citation type="journal article" date="2002" name="Nature">
        <title>Sequence and analysis of chromosome 2 of Dictyostelium discoideum.</title>
        <authorList>
            <person name="Gloeckner G."/>
            <person name="Eichinger L."/>
            <person name="Szafranski K."/>
            <person name="Pachebat J.A."/>
            <person name="Bankier A.T."/>
            <person name="Dear P.H."/>
            <person name="Lehmann R."/>
            <person name="Baumgart C."/>
            <person name="Parra G."/>
            <person name="Abril J.F."/>
            <person name="Guigo R."/>
            <person name="Kumpf K."/>
            <person name="Tunggal B."/>
            <person name="Cox E.C."/>
            <person name="Quail M.A."/>
            <person name="Platzer M."/>
            <person name="Rosenthal A."/>
            <person name="Noegel A.A."/>
        </authorList>
    </citation>
    <scope>NUCLEOTIDE SEQUENCE [LARGE SCALE GENOMIC DNA]</scope>
    <source>
        <strain>AX4</strain>
    </source>
</reference>
<reference key="2">
    <citation type="journal article" date="2005" name="Nature">
        <title>The genome of the social amoeba Dictyostelium discoideum.</title>
        <authorList>
            <person name="Eichinger L."/>
            <person name="Pachebat J.A."/>
            <person name="Gloeckner G."/>
            <person name="Rajandream M.A."/>
            <person name="Sucgang R."/>
            <person name="Berriman M."/>
            <person name="Song J."/>
            <person name="Olsen R."/>
            <person name="Szafranski K."/>
            <person name="Xu Q."/>
            <person name="Tunggal B."/>
            <person name="Kummerfeld S."/>
            <person name="Madera M."/>
            <person name="Konfortov B.A."/>
            <person name="Rivero F."/>
            <person name="Bankier A.T."/>
            <person name="Lehmann R."/>
            <person name="Hamlin N."/>
            <person name="Davies R."/>
            <person name="Gaudet P."/>
            <person name="Fey P."/>
            <person name="Pilcher K."/>
            <person name="Chen G."/>
            <person name="Saunders D."/>
            <person name="Sodergren E.J."/>
            <person name="Davis P."/>
            <person name="Kerhornou A."/>
            <person name="Nie X."/>
            <person name="Hall N."/>
            <person name="Anjard C."/>
            <person name="Hemphill L."/>
            <person name="Bason N."/>
            <person name="Farbrother P."/>
            <person name="Desany B."/>
            <person name="Just E."/>
            <person name="Morio T."/>
            <person name="Rost R."/>
            <person name="Churcher C.M."/>
            <person name="Cooper J."/>
            <person name="Haydock S."/>
            <person name="van Driessche N."/>
            <person name="Cronin A."/>
            <person name="Goodhead I."/>
            <person name="Muzny D.M."/>
            <person name="Mourier T."/>
            <person name="Pain A."/>
            <person name="Lu M."/>
            <person name="Harper D."/>
            <person name="Lindsay R."/>
            <person name="Hauser H."/>
            <person name="James K.D."/>
            <person name="Quiles M."/>
            <person name="Madan Babu M."/>
            <person name="Saito T."/>
            <person name="Buchrieser C."/>
            <person name="Wardroper A."/>
            <person name="Felder M."/>
            <person name="Thangavelu M."/>
            <person name="Johnson D."/>
            <person name="Knights A."/>
            <person name="Loulseged H."/>
            <person name="Mungall K.L."/>
            <person name="Oliver K."/>
            <person name="Price C."/>
            <person name="Quail M.A."/>
            <person name="Urushihara H."/>
            <person name="Hernandez J."/>
            <person name="Rabbinowitsch E."/>
            <person name="Steffen D."/>
            <person name="Sanders M."/>
            <person name="Ma J."/>
            <person name="Kohara Y."/>
            <person name="Sharp S."/>
            <person name="Simmonds M.N."/>
            <person name="Spiegler S."/>
            <person name="Tivey A."/>
            <person name="Sugano S."/>
            <person name="White B."/>
            <person name="Walker D."/>
            <person name="Woodward J.R."/>
            <person name="Winckler T."/>
            <person name="Tanaka Y."/>
            <person name="Shaulsky G."/>
            <person name="Schleicher M."/>
            <person name="Weinstock G.M."/>
            <person name="Rosenthal A."/>
            <person name="Cox E.C."/>
            <person name="Chisholm R.L."/>
            <person name="Gibbs R.A."/>
            <person name="Loomis W.F."/>
            <person name="Platzer M."/>
            <person name="Kay R.R."/>
            <person name="Williams J.G."/>
            <person name="Dear P.H."/>
            <person name="Noegel A.A."/>
            <person name="Barrell B.G."/>
            <person name="Kuspa A."/>
        </authorList>
    </citation>
    <scope>NUCLEOTIDE SEQUENCE [LARGE SCALE GENOMIC DNA]</scope>
    <source>
        <strain>AX4</strain>
    </source>
</reference>
<keyword id="KW-0223">Dioxygenase</keyword>
<keyword id="KW-0408">Iron</keyword>
<keyword id="KW-0479">Metal-binding</keyword>
<keyword id="KW-0560">Oxidoreductase</keyword>
<keyword id="KW-1185">Reference proteome</keyword>
<keyword id="KW-0677">Repeat</keyword>
<dbReference type="EC" id="1.13.-.-"/>
<dbReference type="EMBL" id="AAFI02000010">
    <property type="protein sequence ID" value="EAL70669.1"/>
    <property type="molecule type" value="Genomic_DNA"/>
</dbReference>
<dbReference type="EMBL" id="AAFI02000010">
    <property type="protein sequence ID" value="EAL70711.1"/>
    <property type="molecule type" value="Genomic_DNA"/>
</dbReference>
<dbReference type="RefSeq" id="XP_644613.1">
    <property type="nucleotide sequence ID" value="XM_639521.1"/>
</dbReference>
<dbReference type="RefSeq" id="XP_644637.1">
    <property type="nucleotide sequence ID" value="XM_639545.1"/>
</dbReference>
<dbReference type="SMR" id="Q557J8"/>
<dbReference type="STRING" id="44689.Q557J8"/>
<dbReference type="PaxDb" id="44689-DDB0302487"/>
<dbReference type="EnsemblProtists" id="EAL70669">
    <property type="protein sequence ID" value="EAL70669"/>
    <property type="gene ID" value="DDB_G0273429"/>
</dbReference>
<dbReference type="EnsemblProtists" id="EAL70711">
    <property type="protein sequence ID" value="EAL70711"/>
    <property type="gene ID" value="DDB_G0273513"/>
</dbReference>
<dbReference type="GeneID" id="8618977"/>
<dbReference type="GeneID" id="8619000"/>
<dbReference type="KEGG" id="ddi:DDB_G0273429"/>
<dbReference type="KEGG" id="ddi:DDB_G0273513"/>
<dbReference type="dictyBase" id="DDB_G0273429">
    <property type="gene designation" value="hpdl-1"/>
</dbReference>
<dbReference type="dictyBase" id="DDB_G0273513">
    <property type="gene designation" value="hpdl-2"/>
</dbReference>
<dbReference type="VEuPathDB" id="AmoebaDB:DDB_G0273513"/>
<dbReference type="eggNOG" id="KOG0638">
    <property type="taxonomic scope" value="Eukaryota"/>
</dbReference>
<dbReference type="HOGENOM" id="CLU_552566_0_0_1"/>
<dbReference type="InParanoid" id="Q557J8"/>
<dbReference type="OMA" id="DHIATCI"/>
<dbReference type="PhylomeDB" id="Q557J8"/>
<dbReference type="Reactome" id="R-DDI-2142789">
    <property type="pathway name" value="Ubiquinol biosynthesis"/>
</dbReference>
<dbReference type="Reactome" id="R-DDI-8963684">
    <property type="pathway name" value="Tyrosine catabolism"/>
</dbReference>
<dbReference type="PRO" id="PR:Q557J8"/>
<dbReference type="Proteomes" id="UP000002195">
    <property type="component" value="Chromosome 2"/>
</dbReference>
<dbReference type="GO" id="GO:0003868">
    <property type="term" value="F:4-hydroxyphenylpyruvate dioxygenase activity"/>
    <property type="evidence" value="ECO:0000318"/>
    <property type="project" value="GO_Central"/>
</dbReference>
<dbReference type="GO" id="GO:0046872">
    <property type="term" value="F:metal ion binding"/>
    <property type="evidence" value="ECO:0007669"/>
    <property type="project" value="UniProtKB-KW"/>
</dbReference>
<dbReference type="GO" id="GO:0006572">
    <property type="term" value="P:tyrosine catabolic process"/>
    <property type="evidence" value="ECO:0000318"/>
    <property type="project" value="GO_Central"/>
</dbReference>
<dbReference type="CDD" id="cd07250">
    <property type="entry name" value="HPPD_C_like"/>
    <property type="match status" value="1"/>
</dbReference>
<dbReference type="CDD" id="cd08342">
    <property type="entry name" value="HPPD_N_like"/>
    <property type="match status" value="1"/>
</dbReference>
<dbReference type="FunFam" id="3.10.180.10:FF:000081">
    <property type="entry name" value="Uncharacterized 4-hydroxyphenylpyruvate dioxygenase-like protein"/>
    <property type="match status" value="1"/>
</dbReference>
<dbReference type="FunFam" id="3.10.180.10:FF:000083">
    <property type="entry name" value="Uncharacterized 4-hydroxyphenylpyruvate dioxygenase-like protein"/>
    <property type="match status" value="1"/>
</dbReference>
<dbReference type="Gene3D" id="3.10.180.10">
    <property type="entry name" value="2,3-Dihydroxybiphenyl 1,2-Dioxygenase, domain 1"/>
    <property type="match status" value="2"/>
</dbReference>
<dbReference type="InterPro" id="IPR005956">
    <property type="entry name" value="4OHPhenylPyrv_dOase"/>
</dbReference>
<dbReference type="InterPro" id="IPR041735">
    <property type="entry name" value="4OHPhenylPyrv_dOase_C"/>
</dbReference>
<dbReference type="InterPro" id="IPR041736">
    <property type="entry name" value="4OHPhenylPyrv_dOase_N"/>
</dbReference>
<dbReference type="InterPro" id="IPR029068">
    <property type="entry name" value="Glyas_Bleomycin-R_OHBP_Dase"/>
</dbReference>
<dbReference type="InterPro" id="IPR004360">
    <property type="entry name" value="Glyas_Fos-R_dOase_dom"/>
</dbReference>
<dbReference type="InterPro" id="IPR037523">
    <property type="entry name" value="VOC"/>
</dbReference>
<dbReference type="PANTHER" id="PTHR11959">
    <property type="entry name" value="4-HYDROXYPHENYLPYRUVATE DIOXYGENASE"/>
    <property type="match status" value="1"/>
</dbReference>
<dbReference type="PANTHER" id="PTHR11959:SF6">
    <property type="entry name" value="VOC DOMAIN-CONTAINING PROTEIN"/>
    <property type="match status" value="1"/>
</dbReference>
<dbReference type="Pfam" id="PF00903">
    <property type="entry name" value="Glyoxalase"/>
    <property type="match status" value="1"/>
</dbReference>
<dbReference type="SUPFAM" id="SSF54593">
    <property type="entry name" value="Glyoxalase/Bleomycin resistance protein/Dihydroxybiphenyl dioxygenase"/>
    <property type="match status" value="1"/>
</dbReference>
<dbReference type="PROSITE" id="PS51819">
    <property type="entry name" value="VOC"/>
    <property type="match status" value="2"/>
</dbReference>
<gene>
    <name type="primary">hpdl-1</name>
    <name type="ORF">DDB_G0273429</name>
</gene>
<gene>
    <name type="primary">hpdl-2</name>
    <name type="ORF">DDB_G0273513</name>
</gene>
<protein>
    <recommendedName>
        <fullName>Uncharacterized 4-hydroxyphenylpyruvate dioxygenase-like protein</fullName>
        <ecNumber>1.13.-.-</ecNumber>
    </recommendedName>
</protein>
<organism>
    <name type="scientific">Dictyostelium discoideum</name>
    <name type="common">Social amoeba</name>
    <dbReference type="NCBI Taxonomy" id="44689"/>
    <lineage>
        <taxon>Eukaryota</taxon>
        <taxon>Amoebozoa</taxon>
        <taxon>Evosea</taxon>
        <taxon>Eumycetozoa</taxon>
        <taxon>Dictyostelia</taxon>
        <taxon>Dictyosteliales</taxon>
        <taxon>Dictyosteliaceae</taxon>
        <taxon>Dictyostelium</taxon>
    </lineage>
</organism>